<name>TFE_METAR</name>
<comment type="function">
    <text evidence="1">Transcription factor that plays a role in the activation of archaeal genes transcribed by RNA polymerase. Facilitates transcription initiation by enhancing TATA-box recognition by TATA-box-binding protein (Tbp), and transcription factor B (Tfb) and RNA polymerase recruitment. Not absolutely required for transcription in vitro, but particularly important in cases where Tbp or Tfb function is not optimal. It dynamically alters the nucleic acid-binding properties of RNA polymerases by stabilizing the initiation complex and destabilizing elongation complexes. Seems to translocate with the RNA polymerase following initiation and acts by binding to the non template strand of the transcription bubble in elongation complexes.</text>
</comment>
<comment type="subunit">
    <text evidence="1">Monomer. Interaction with RNA polymerase subunits RpoF and RpoE is necessary for Tfe stimulatory transcription activity. Able to interact with Tbp and RNA polymerase in the absence of DNA promoter. Interacts both with the preinitiation and elongation complexes.</text>
</comment>
<comment type="domain">
    <text evidence="1">The winged helix domain is involved in binding to DNA in the preinitiation complex.</text>
</comment>
<comment type="similarity">
    <text evidence="1">Belongs to the TFE family.</text>
</comment>
<proteinExistence type="inferred from homology"/>
<protein>
    <recommendedName>
        <fullName evidence="1">Transcription factor E</fullName>
        <shortName evidence="1">TFE</shortName>
    </recommendedName>
    <alternativeName>
        <fullName evidence="1">TFIIE subunit alpha homolog</fullName>
    </alternativeName>
    <alternativeName>
        <fullName evidence="1">Transcription initiation factor TFIIE</fullName>
    </alternativeName>
</protein>
<accession>Q0W8N8</accession>
<keyword id="KW-0238">DNA-binding</keyword>
<keyword id="KW-1185">Reference proteome</keyword>
<keyword id="KW-0804">Transcription</keyword>
<keyword id="KW-0805">Transcription regulation</keyword>
<reference key="1">
    <citation type="journal article" date="2006" name="Science">
        <title>Genome of rice cluster I archaea -- the key methane producers in the rice rhizosphere.</title>
        <authorList>
            <person name="Erkel C."/>
            <person name="Kube M."/>
            <person name="Reinhardt R."/>
            <person name="Liesack W."/>
        </authorList>
    </citation>
    <scope>NUCLEOTIDE SEQUENCE [LARGE SCALE GENOMIC DNA]</scope>
    <source>
        <strain>DSM 22066 / NBRC 105507 / MRE50</strain>
    </source>
</reference>
<dbReference type="EMBL" id="AM114193">
    <property type="protein sequence ID" value="CAJ35255.1"/>
    <property type="molecule type" value="Genomic_DNA"/>
</dbReference>
<dbReference type="RefSeq" id="WP_012037235.1">
    <property type="nucleotide sequence ID" value="NC_009464.1"/>
</dbReference>
<dbReference type="SMR" id="Q0W8N8"/>
<dbReference type="STRING" id="351160.LRC274"/>
<dbReference type="GeneID" id="5143919"/>
<dbReference type="KEGG" id="rci:LRC274"/>
<dbReference type="eggNOG" id="arCOG04270">
    <property type="taxonomic scope" value="Archaea"/>
</dbReference>
<dbReference type="OrthoDB" id="5935at2157"/>
<dbReference type="Proteomes" id="UP000000663">
    <property type="component" value="Chromosome"/>
</dbReference>
<dbReference type="GO" id="GO:0003677">
    <property type="term" value="F:DNA binding"/>
    <property type="evidence" value="ECO:0007669"/>
    <property type="project" value="UniProtKB-KW"/>
</dbReference>
<dbReference type="GO" id="GO:0006355">
    <property type="term" value="P:regulation of DNA-templated transcription"/>
    <property type="evidence" value="ECO:0007669"/>
    <property type="project" value="InterPro"/>
</dbReference>
<dbReference type="GO" id="GO:0006367">
    <property type="term" value="P:transcription initiation at RNA polymerase II promoter"/>
    <property type="evidence" value="ECO:0007669"/>
    <property type="project" value="InterPro"/>
</dbReference>
<dbReference type="Gene3D" id="1.10.10.10">
    <property type="entry name" value="Winged helix-like DNA-binding domain superfamily/Winged helix DNA-binding domain"/>
    <property type="match status" value="1"/>
</dbReference>
<dbReference type="HAMAP" id="MF_01909">
    <property type="entry name" value="TFE_arch"/>
    <property type="match status" value="1"/>
</dbReference>
<dbReference type="InterPro" id="IPR016481">
    <property type="entry name" value="TF_E_archaea"/>
</dbReference>
<dbReference type="InterPro" id="IPR017919">
    <property type="entry name" value="TFIIE/TFIIEa_HTH"/>
</dbReference>
<dbReference type="InterPro" id="IPR002853">
    <property type="entry name" value="TFIIE_asu"/>
</dbReference>
<dbReference type="InterPro" id="IPR024550">
    <property type="entry name" value="TFIIEa/SarR/Rpc3_HTH_dom"/>
</dbReference>
<dbReference type="InterPro" id="IPR036388">
    <property type="entry name" value="WH-like_DNA-bd_sf"/>
</dbReference>
<dbReference type="InterPro" id="IPR036390">
    <property type="entry name" value="WH_DNA-bd_sf"/>
</dbReference>
<dbReference type="Pfam" id="PF02002">
    <property type="entry name" value="TFIIE_alpha"/>
    <property type="match status" value="1"/>
</dbReference>
<dbReference type="PIRSF" id="PIRSF006373">
    <property type="entry name" value="TF_E_archaea"/>
    <property type="match status" value="1"/>
</dbReference>
<dbReference type="SMART" id="SM00531">
    <property type="entry name" value="TFIIE"/>
    <property type="match status" value="1"/>
</dbReference>
<dbReference type="SUPFAM" id="SSF46785">
    <property type="entry name" value="Winged helix' DNA-binding domain"/>
    <property type="match status" value="1"/>
</dbReference>
<dbReference type="PROSITE" id="PS51344">
    <property type="entry name" value="HTH_TFE_IIE"/>
    <property type="match status" value="1"/>
</dbReference>
<organism>
    <name type="scientific">Methanocella arvoryzae (strain DSM 22066 / NBRC 105507 / MRE50)</name>
    <dbReference type="NCBI Taxonomy" id="351160"/>
    <lineage>
        <taxon>Archaea</taxon>
        <taxon>Methanobacteriati</taxon>
        <taxon>Methanobacteriota</taxon>
        <taxon>Stenosarchaea group</taxon>
        <taxon>Methanomicrobia</taxon>
        <taxon>Methanocellales</taxon>
        <taxon>Methanocellaceae</taxon>
        <taxon>Methanocella</taxon>
    </lineage>
</organism>
<feature type="chain" id="PRO_0000326626" description="Transcription factor E">
    <location>
        <begin position="1"/>
        <end position="171"/>
    </location>
</feature>
<feature type="domain" description="HTH TFE/IIEalpha-type" evidence="1">
    <location>
        <begin position="5"/>
        <end position="91"/>
    </location>
</feature>
<gene>
    <name evidence="1" type="primary">tfe</name>
    <name type="ordered locus">UNCMA_29200</name>
    <name type="ORF">LRC274</name>
</gene>
<evidence type="ECO:0000255" key="1">
    <source>
        <dbReference type="HAMAP-Rule" id="MF_01909"/>
    </source>
</evidence>
<sequence>MSALDNKAVRGYIQKLVGDEGMAVVEKMIEKVPDQEVTDEQVAQISGINLNLVRKTLYILYENHLAMYRRERDKDSGWLTYLWKLDLDNSVHMLRNEARKLIKKLERRLEFESNEFYICQEEAPHRILFDYAMETNFVCPVDETPLMHYDNTAEKQALRNRIDDLKKSLAQ</sequence>